<evidence type="ECO:0000255" key="1">
    <source>
        <dbReference type="HAMAP-Rule" id="MF_01345"/>
    </source>
</evidence>
<evidence type="ECO:0000305" key="2"/>
<accession>A5F557</accession>
<accession>C3LXI6</accession>
<comment type="function">
    <text evidence="1">One of the primary rRNA binding proteins, it binds specifically to the 5'-end of 16S ribosomal RNA.</text>
</comment>
<comment type="subunit">
    <text evidence="1">Part of the 30S ribosomal subunit.</text>
</comment>
<comment type="similarity">
    <text evidence="1">Belongs to the universal ribosomal protein uS17 family.</text>
</comment>
<sequence length="84" mass="9639">MSDKIRTQLGRVVSDKMDKSIVVAIERMVKHPIYGKFVKRTTKVHAHDENNECGIGDTVEIRECRPLSKTKSWTLVKIVEKAKM</sequence>
<keyword id="KW-0687">Ribonucleoprotein</keyword>
<keyword id="KW-0689">Ribosomal protein</keyword>
<keyword id="KW-0694">RNA-binding</keyword>
<keyword id="KW-0699">rRNA-binding</keyword>
<proteinExistence type="inferred from homology"/>
<organism>
    <name type="scientific">Vibrio cholerae serotype O1 (strain ATCC 39541 / Classical Ogawa 395 / O395)</name>
    <dbReference type="NCBI Taxonomy" id="345073"/>
    <lineage>
        <taxon>Bacteria</taxon>
        <taxon>Pseudomonadati</taxon>
        <taxon>Pseudomonadota</taxon>
        <taxon>Gammaproteobacteria</taxon>
        <taxon>Vibrionales</taxon>
        <taxon>Vibrionaceae</taxon>
        <taxon>Vibrio</taxon>
    </lineage>
</organism>
<protein>
    <recommendedName>
        <fullName evidence="1">Small ribosomal subunit protein uS17</fullName>
    </recommendedName>
    <alternativeName>
        <fullName evidence="2">30S ribosomal protein S17</fullName>
    </alternativeName>
</protein>
<name>RS17_VIBC3</name>
<dbReference type="EMBL" id="CP000627">
    <property type="protein sequence ID" value="ABQ20194.1"/>
    <property type="molecule type" value="Genomic_DNA"/>
</dbReference>
<dbReference type="EMBL" id="CP001235">
    <property type="protein sequence ID" value="ACP10686.1"/>
    <property type="molecule type" value="Genomic_DNA"/>
</dbReference>
<dbReference type="RefSeq" id="WP_001280803.1">
    <property type="nucleotide sequence ID" value="NZ_JAACZH010000007.1"/>
</dbReference>
<dbReference type="SMR" id="A5F557"/>
<dbReference type="GeneID" id="69718809"/>
<dbReference type="KEGG" id="vco:VC0395_A2165"/>
<dbReference type="KEGG" id="vcr:VC395_2700"/>
<dbReference type="PATRIC" id="fig|345073.21.peg.2600"/>
<dbReference type="eggNOG" id="COG0186">
    <property type="taxonomic scope" value="Bacteria"/>
</dbReference>
<dbReference type="HOGENOM" id="CLU_073626_1_1_6"/>
<dbReference type="OrthoDB" id="9811714at2"/>
<dbReference type="Proteomes" id="UP000000249">
    <property type="component" value="Chromosome 2"/>
</dbReference>
<dbReference type="GO" id="GO:0022627">
    <property type="term" value="C:cytosolic small ribosomal subunit"/>
    <property type="evidence" value="ECO:0007669"/>
    <property type="project" value="TreeGrafter"/>
</dbReference>
<dbReference type="GO" id="GO:0019843">
    <property type="term" value="F:rRNA binding"/>
    <property type="evidence" value="ECO:0007669"/>
    <property type="project" value="UniProtKB-UniRule"/>
</dbReference>
<dbReference type="GO" id="GO:0003735">
    <property type="term" value="F:structural constituent of ribosome"/>
    <property type="evidence" value="ECO:0007669"/>
    <property type="project" value="InterPro"/>
</dbReference>
<dbReference type="GO" id="GO:0006412">
    <property type="term" value="P:translation"/>
    <property type="evidence" value="ECO:0007669"/>
    <property type="project" value="UniProtKB-UniRule"/>
</dbReference>
<dbReference type="CDD" id="cd00364">
    <property type="entry name" value="Ribosomal_uS17"/>
    <property type="match status" value="1"/>
</dbReference>
<dbReference type="FunFam" id="2.40.50.140:FF:000014">
    <property type="entry name" value="30S ribosomal protein S17"/>
    <property type="match status" value="1"/>
</dbReference>
<dbReference type="Gene3D" id="2.40.50.140">
    <property type="entry name" value="Nucleic acid-binding proteins"/>
    <property type="match status" value="1"/>
</dbReference>
<dbReference type="HAMAP" id="MF_01345_B">
    <property type="entry name" value="Ribosomal_uS17_B"/>
    <property type="match status" value="1"/>
</dbReference>
<dbReference type="InterPro" id="IPR012340">
    <property type="entry name" value="NA-bd_OB-fold"/>
</dbReference>
<dbReference type="InterPro" id="IPR000266">
    <property type="entry name" value="Ribosomal_uS17"/>
</dbReference>
<dbReference type="InterPro" id="IPR019984">
    <property type="entry name" value="Ribosomal_uS17_bact/chlr"/>
</dbReference>
<dbReference type="InterPro" id="IPR019979">
    <property type="entry name" value="Ribosomal_uS17_CS"/>
</dbReference>
<dbReference type="NCBIfam" id="NF004123">
    <property type="entry name" value="PRK05610.1"/>
    <property type="match status" value="1"/>
</dbReference>
<dbReference type="NCBIfam" id="TIGR03635">
    <property type="entry name" value="uS17_bact"/>
    <property type="match status" value="1"/>
</dbReference>
<dbReference type="PANTHER" id="PTHR10744">
    <property type="entry name" value="40S RIBOSOMAL PROTEIN S11 FAMILY MEMBER"/>
    <property type="match status" value="1"/>
</dbReference>
<dbReference type="PANTHER" id="PTHR10744:SF1">
    <property type="entry name" value="SMALL RIBOSOMAL SUBUNIT PROTEIN US17M"/>
    <property type="match status" value="1"/>
</dbReference>
<dbReference type="Pfam" id="PF00366">
    <property type="entry name" value="Ribosomal_S17"/>
    <property type="match status" value="1"/>
</dbReference>
<dbReference type="PRINTS" id="PR00973">
    <property type="entry name" value="RIBOSOMALS17"/>
</dbReference>
<dbReference type="SUPFAM" id="SSF50249">
    <property type="entry name" value="Nucleic acid-binding proteins"/>
    <property type="match status" value="1"/>
</dbReference>
<dbReference type="PROSITE" id="PS00056">
    <property type="entry name" value="RIBOSOMAL_S17"/>
    <property type="match status" value="1"/>
</dbReference>
<reference key="1">
    <citation type="submission" date="2007-03" db="EMBL/GenBank/DDBJ databases">
        <authorList>
            <person name="Heidelberg J."/>
        </authorList>
    </citation>
    <scope>NUCLEOTIDE SEQUENCE [LARGE SCALE GENOMIC DNA]</scope>
    <source>
        <strain>ATCC 39541 / Classical Ogawa 395 / O395</strain>
    </source>
</reference>
<reference key="2">
    <citation type="journal article" date="2008" name="PLoS ONE">
        <title>A recalibrated molecular clock and independent origins for the cholera pandemic clones.</title>
        <authorList>
            <person name="Feng L."/>
            <person name="Reeves P.R."/>
            <person name="Lan R."/>
            <person name="Ren Y."/>
            <person name="Gao C."/>
            <person name="Zhou Z."/>
            <person name="Ren Y."/>
            <person name="Cheng J."/>
            <person name="Wang W."/>
            <person name="Wang J."/>
            <person name="Qian W."/>
            <person name="Li D."/>
            <person name="Wang L."/>
        </authorList>
    </citation>
    <scope>NUCLEOTIDE SEQUENCE [LARGE SCALE GENOMIC DNA]</scope>
    <source>
        <strain>ATCC 39541 / Classical Ogawa 395 / O395</strain>
    </source>
</reference>
<feature type="chain" id="PRO_1000073348" description="Small ribosomal subunit protein uS17">
    <location>
        <begin position="1"/>
        <end position="84"/>
    </location>
</feature>
<gene>
    <name evidence="1" type="primary">rpsQ</name>
    <name type="ordered locus">VC0395_A2165</name>
    <name type="ordered locus">VC395_2700</name>
</gene>